<accession>Q87Q77</accession>
<feature type="chain" id="PRO_0000161048" description="Histidine ammonia-lyase">
    <location>
        <begin position="1"/>
        <end position="511"/>
    </location>
</feature>
<feature type="modified residue" description="2,3-didehydroalanine (Ser)" evidence="1">
    <location>
        <position position="144"/>
    </location>
</feature>
<feature type="cross-link" description="5-imidazolinone (Ala-Gly)" evidence="1">
    <location>
        <begin position="143"/>
        <end position="145"/>
    </location>
</feature>
<reference key="1">
    <citation type="journal article" date="2003" name="Lancet">
        <title>Genome sequence of Vibrio parahaemolyticus: a pathogenic mechanism distinct from that of V. cholerae.</title>
        <authorList>
            <person name="Makino K."/>
            <person name="Oshima K."/>
            <person name="Kurokawa K."/>
            <person name="Yokoyama K."/>
            <person name="Uda T."/>
            <person name="Tagomori K."/>
            <person name="Iijima Y."/>
            <person name="Najima M."/>
            <person name="Nakano M."/>
            <person name="Yamashita A."/>
            <person name="Kubota Y."/>
            <person name="Kimura S."/>
            <person name="Yasunaga T."/>
            <person name="Honda T."/>
            <person name="Shinagawa H."/>
            <person name="Hattori M."/>
            <person name="Iida T."/>
        </authorList>
    </citation>
    <scope>NUCLEOTIDE SEQUENCE [LARGE SCALE GENOMIC DNA]</scope>
    <source>
        <strain>RIMD 2210633</strain>
    </source>
</reference>
<keyword id="KW-0963">Cytoplasm</keyword>
<keyword id="KW-0369">Histidine metabolism</keyword>
<keyword id="KW-0456">Lyase</keyword>
<sequence>MLNLTLKPGHISLNELRQVSRSPVNLTLDPEAIPGIEESTQVVDRVIAEDRTVYGINTGFGLLANTRIAPEDLETLQRSIVLSHAAGIGKFMSDETVRLMMVLKINSLARGFSGIRLKVINMLIDLVNAQVYPCVPQKGSVGASGDLAPLAHMSTVLLGEGQARHNGQIVSGYEALKIAGLEPITLAPKEGLALLNGTQASTAFALEGLFIAEDLFASATVCGAMSVEAALGSRRPFDPRIHRVRGHRSTMDAAMAYRHLLDTSSEIGESHTNCEKVQDPYSLRCQPQVMGACLQQIRNSAEVLQVEANSVSDNPLVFAEDNDIISGGNFHAEPVAMAADNLALAIAEIGSLSERRMALLIDSALSKLPPFLVDNGGVNSGFMIAQVTSAALASENKTLAHPASVDSLPTSANQEDHVSMATFAARRLKEMGENTRGILAVEYLSAAQGLDFRAPNKSSERIEIAKQMLREKVSFYDKDRYFAPDIEQANTLLKLALHNALMPENLLPSVH</sequence>
<comment type="catalytic activity">
    <reaction evidence="1">
        <text>L-histidine = trans-urocanate + NH4(+)</text>
        <dbReference type="Rhea" id="RHEA:21232"/>
        <dbReference type="ChEBI" id="CHEBI:17771"/>
        <dbReference type="ChEBI" id="CHEBI:28938"/>
        <dbReference type="ChEBI" id="CHEBI:57595"/>
        <dbReference type="EC" id="4.3.1.3"/>
    </reaction>
</comment>
<comment type="pathway">
    <text evidence="1">Amino-acid degradation; L-histidine degradation into L-glutamate; N-formimidoyl-L-glutamate from L-histidine: step 1/3.</text>
</comment>
<comment type="subcellular location">
    <subcellularLocation>
        <location evidence="1">Cytoplasm</location>
    </subcellularLocation>
</comment>
<comment type="PTM">
    <text evidence="1">Contains an active site 4-methylidene-imidazol-5-one (MIO), which is formed autocatalytically by cyclization and dehydration of residues Ala-Ser-Gly.</text>
</comment>
<comment type="similarity">
    <text evidence="1">Belongs to the PAL/histidase family.</text>
</comment>
<proteinExistence type="inferred from homology"/>
<evidence type="ECO:0000255" key="1">
    <source>
        <dbReference type="HAMAP-Rule" id="MF_00229"/>
    </source>
</evidence>
<protein>
    <recommendedName>
        <fullName evidence="1">Histidine ammonia-lyase</fullName>
        <shortName evidence="1">Histidase</shortName>
        <ecNumber evidence="1">4.3.1.3</ecNumber>
    </recommendedName>
</protein>
<organism>
    <name type="scientific">Vibrio parahaemolyticus serotype O3:K6 (strain RIMD 2210633)</name>
    <dbReference type="NCBI Taxonomy" id="223926"/>
    <lineage>
        <taxon>Bacteria</taxon>
        <taxon>Pseudomonadati</taxon>
        <taxon>Pseudomonadota</taxon>
        <taxon>Gammaproteobacteria</taxon>
        <taxon>Vibrionales</taxon>
        <taxon>Vibrionaceae</taxon>
        <taxon>Vibrio</taxon>
    </lineage>
</organism>
<gene>
    <name evidence="1" type="primary">hutH</name>
    <name type="ordered locus">VP1273</name>
</gene>
<dbReference type="EC" id="4.3.1.3" evidence="1"/>
<dbReference type="EMBL" id="BA000031">
    <property type="protein sequence ID" value="BAC59536.1"/>
    <property type="molecule type" value="Genomic_DNA"/>
</dbReference>
<dbReference type="RefSeq" id="NP_797652.1">
    <property type="nucleotide sequence ID" value="NC_004603.1"/>
</dbReference>
<dbReference type="RefSeq" id="WP_011105800.1">
    <property type="nucleotide sequence ID" value="NC_004603.1"/>
</dbReference>
<dbReference type="SMR" id="Q87Q77"/>
<dbReference type="GeneID" id="1188778"/>
<dbReference type="KEGG" id="vpa:VP1273"/>
<dbReference type="PATRIC" id="fig|223926.6.peg.1213"/>
<dbReference type="eggNOG" id="COG2986">
    <property type="taxonomic scope" value="Bacteria"/>
</dbReference>
<dbReference type="HOGENOM" id="CLU_014801_4_0_6"/>
<dbReference type="UniPathway" id="UPA00379">
    <property type="reaction ID" value="UER00549"/>
</dbReference>
<dbReference type="Proteomes" id="UP000002493">
    <property type="component" value="Chromosome 1"/>
</dbReference>
<dbReference type="GO" id="GO:0005737">
    <property type="term" value="C:cytoplasm"/>
    <property type="evidence" value="ECO:0007669"/>
    <property type="project" value="UniProtKB-SubCell"/>
</dbReference>
<dbReference type="GO" id="GO:0004397">
    <property type="term" value="F:histidine ammonia-lyase activity"/>
    <property type="evidence" value="ECO:0007669"/>
    <property type="project" value="UniProtKB-UniRule"/>
</dbReference>
<dbReference type="GO" id="GO:0019556">
    <property type="term" value="P:L-histidine catabolic process to glutamate and formamide"/>
    <property type="evidence" value="ECO:0007669"/>
    <property type="project" value="UniProtKB-UniPathway"/>
</dbReference>
<dbReference type="GO" id="GO:0019557">
    <property type="term" value="P:L-histidine catabolic process to glutamate and formate"/>
    <property type="evidence" value="ECO:0007669"/>
    <property type="project" value="UniProtKB-UniPathway"/>
</dbReference>
<dbReference type="CDD" id="cd00332">
    <property type="entry name" value="PAL-HAL"/>
    <property type="match status" value="1"/>
</dbReference>
<dbReference type="FunFam" id="1.10.275.10:FF:000005">
    <property type="entry name" value="Histidine ammonia-lyase"/>
    <property type="match status" value="1"/>
</dbReference>
<dbReference type="FunFam" id="1.20.200.10:FF:000003">
    <property type="entry name" value="Histidine ammonia-lyase"/>
    <property type="match status" value="1"/>
</dbReference>
<dbReference type="Gene3D" id="1.20.200.10">
    <property type="entry name" value="Fumarase/aspartase (Central domain)"/>
    <property type="match status" value="1"/>
</dbReference>
<dbReference type="Gene3D" id="1.10.275.10">
    <property type="entry name" value="Fumarase/aspartase (N-terminal domain)"/>
    <property type="match status" value="1"/>
</dbReference>
<dbReference type="HAMAP" id="MF_00229">
    <property type="entry name" value="His_ammonia_lyase"/>
    <property type="match status" value="1"/>
</dbReference>
<dbReference type="InterPro" id="IPR001106">
    <property type="entry name" value="Aromatic_Lyase"/>
</dbReference>
<dbReference type="InterPro" id="IPR024083">
    <property type="entry name" value="Fumarase/histidase_N"/>
</dbReference>
<dbReference type="InterPro" id="IPR005921">
    <property type="entry name" value="HutH"/>
</dbReference>
<dbReference type="InterPro" id="IPR008948">
    <property type="entry name" value="L-Aspartase-like"/>
</dbReference>
<dbReference type="InterPro" id="IPR022313">
    <property type="entry name" value="Phe/His_NH3-lyase_AS"/>
</dbReference>
<dbReference type="NCBIfam" id="TIGR01225">
    <property type="entry name" value="hutH"/>
    <property type="match status" value="1"/>
</dbReference>
<dbReference type="NCBIfam" id="NF006871">
    <property type="entry name" value="PRK09367.1"/>
    <property type="match status" value="1"/>
</dbReference>
<dbReference type="PANTHER" id="PTHR10362">
    <property type="entry name" value="HISTIDINE AMMONIA-LYASE"/>
    <property type="match status" value="1"/>
</dbReference>
<dbReference type="Pfam" id="PF00221">
    <property type="entry name" value="Lyase_aromatic"/>
    <property type="match status" value="1"/>
</dbReference>
<dbReference type="SUPFAM" id="SSF48557">
    <property type="entry name" value="L-aspartase-like"/>
    <property type="match status" value="1"/>
</dbReference>
<dbReference type="PROSITE" id="PS00488">
    <property type="entry name" value="PAL_HISTIDASE"/>
    <property type="match status" value="1"/>
</dbReference>
<name>HUTH_VIBPA</name>